<evidence type="ECO:0000255" key="1">
    <source>
        <dbReference type="HAMAP-Rule" id="MF_01030"/>
    </source>
</evidence>
<keyword id="KW-0456">Lyase</keyword>
<keyword id="KW-0663">Pyridoxal phosphate</keyword>
<keyword id="KW-1185">Reference proteome</keyword>
<sequence>MENAKMNSLIAQYPLVKDLVALKETTWFNPGTTSLAEGLPYVGLTEQDVQDAHARLSRFAPYLAKAFPETAATGGIIESELVAIPAMQKRLEKEYQQPISGQLLLKKDSHLPISGSIKARGGIYEVLAHAEKLALEAGLLTLDDDYSKLLSPEFKQFFSQYSIAVGSTGNLGLSIGIMSARIGFKVTVHMSADARAWKKAKLRSHGVTVVEYEQDYGVAVEEGRKAAQSDPNCFFIDDENSRTLFLGYSVAGQRLKAQFAQQGSIVDADNPLFVYLPCGVGGGPGGVAFGLKLAFGDHVHCFFAEPTHSPCMLLGVHTGLHDQISVQDIGIDNLTAADGLAVGRASGFVGRAMERLLDGFYTLSDQTMYDMLGWLAQEEGIRLEPSALAGMAGPQRVCASVSYQQMHGFSAEQLRNTTHLVWATGGGMVPEEEMNQYLAKGR</sequence>
<protein>
    <recommendedName>
        <fullName evidence="1">D-serine dehydratase</fullName>
        <ecNumber evidence="1">4.3.1.18</ecNumber>
    </recommendedName>
    <alternativeName>
        <fullName evidence="1">D-serine deaminase</fullName>
        <shortName evidence="1">DSD</shortName>
    </alternativeName>
</protein>
<accession>B7LBR9</accession>
<organism>
    <name type="scientific">Escherichia coli (strain 55989 / EAEC)</name>
    <dbReference type="NCBI Taxonomy" id="585055"/>
    <lineage>
        <taxon>Bacteria</taxon>
        <taxon>Pseudomonadati</taxon>
        <taxon>Pseudomonadota</taxon>
        <taxon>Gammaproteobacteria</taxon>
        <taxon>Enterobacterales</taxon>
        <taxon>Enterobacteriaceae</taxon>
        <taxon>Escherichia</taxon>
    </lineage>
</organism>
<reference key="1">
    <citation type="journal article" date="2009" name="PLoS Genet.">
        <title>Organised genome dynamics in the Escherichia coli species results in highly diverse adaptive paths.</title>
        <authorList>
            <person name="Touchon M."/>
            <person name="Hoede C."/>
            <person name="Tenaillon O."/>
            <person name="Barbe V."/>
            <person name="Baeriswyl S."/>
            <person name="Bidet P."/>
            <person name="Bingen E."/>
            <person name="Bonacorsi S."/>
            <person name="Bouchier C."/>
            <person name="Bouvet O."/>
            <person name="Calteau A."/>
            <person name="Chiapello H."/>
            <person name="Clermont O."/>
            <person name="Cruveiller S."/>
            <person name="Danchin A."/>
            <person name="Diard M."/>
            <person name="Dossat C."/>
            <person name="Karoui M.E."/>
            <person name="Frapy E."/>
            <person name="Garry L."/>
            <person name="Ghigo J.M."/>
            <person name="Gilles A.M."/>
            <person name="Johnson J."/>
            <person name="Le Bouguenec C."/>
            <person name="Lescat M."/>
            <person name="Mangenot S."/>
            <person name="Martinez-Jehanne V."/>
            <person name="Matic I."/>
            <person name="Nassif X."/>
            <person name="Oztas S."/>
            <person name="Petit M.A."/>
            <person name="Pichon C."/>
            <person name="Rouy Z."/>
            <person name="Ruf C.S."/>
            <person name="Schneider D."/>
            <person name="Tourret J."/>
            <person name="Vacherie B."/>
            <person name="Vallenet D."/>
            <person name="Medigue C."/>
            <person name="Rocha E.P.C."/>
            <person name="Denamur E."/>
        </authorList>
    </citation>
    <scope>NUCLEOTIDE SEQUENCE [LARGE SCALE GENOMIC DNA]</scope>
    <source>
        <strain>55989 / EAEC</strain>
    </source>
</reference>
<proteinExistence type="inferred from homology"/>
<gene>
    <name evidence="1" type="primary">dsdA</name>
    <name type="ordered locus">EC55989_2659</name>
</gene>
<dbReference type="EC" id="4.3.1.18" evidence="1"/>
<dbReference type="EMBL" id="CU928145">
    <property type="protein sequence ID" value="CAU98526.1"/>
    <property type="molecule type" value="Genomic_DNA"/>
</dbReference>
<dbReference type="RefSeq" id="WP_000426433.1">
    <property type="nucleotide sequence ID" value="NC_011748.1"/>
</dbReference>
<dbReference type="SMR" id="B7LBR9"/>
<dbReference type="KEGG" id="eck:EC55989_2659"/>
<dbReference type="HOGENOM" id="CLU_035707_0_0_6"/>
<dbReference type="Proteomes" id="UP000000746">
    <property type="component" value="Chromosome"/>
</dbReference>
<dbReference type="GO" id="GO:0008721">
    <property type="term" value="F:D-serine ammonia-lyase activity"/>
    <property type="evidence" value="ECO:0007669"/>
    <property type="project" value="UniProtKB-EC"/>
</dbReference>
<dbReference type="GO" id="GO:0016836">
    <property type="term" value="F:hydro-lyase activity"/>
    <property type="evidence" value="ECO:0007669"/>
    <property type="project" value="UniProtKB-UniRule"/>
</dbReference>
<dbReference type="GO" id="GO:0030170">
    <property type="term" value="F:pyridoxal phosphate binding"/>
    <property type="evidence" value="ECO:0007669"/>
    <property type="project" value="InterPro"/>
</dbReference>
<dbReference type="GO" id="GO:0036088">
    <property type="term" value="P:D-serine catabolic process"/>
    <property type="evidence" value="ECO:0007669"/>
    <property type="project" value="TreeGrafter"/>
</dbReference>
<dbReference type="GO" id="GO:0009097">
    <property type="term" value="P:isoleucine biosynthetic process"/>
    <property type="evidence" value="ECO:0007669"/>
    <property type="project" value="TreeGrafter"/>
</dbReference>
<dbReference type="CDD" id="cd06447">
    <property type="entry name" value="D-Ser-dehyd"/>
    <property type="match status" value="1"/>
</dbReference>
<dbReference type="FunFam" id="3.40.50.1100:FF:000018">
    <property type="entry name" value="D-serine dehydratase"/>
    <property type="match status" value="1"/>
</dbReference>
<dbReference type="Gene3D" id="3.40.50.1100">
    <property type="match status" value="2"/>
</dbReference>
<dbReference type="HAMAP" id="MF_01030">
    <property type="entry name" value="D_Ser_dehydrat"/>
    <property type="match status" value="1"/>
</dbReference>
<dbReference type="InterPro" id="IPR011780">
    <property type="entry name" value="D_Ser_am_lyase"/>
</dbReference>
<dbReference type="InterPro" id="IPR050147">
    <property type="entry name" value="Ser/Thr_Dehydratase"/>
</dbReference>
<dbReference type="InterPro" id="IPR000634">
    <property type="entry name" value="Ser/Thr_deHydtase_PyrdxlP-BS"/>
</dbReference>
<dbReference type="InterPro" id="IPR001926">
    <property type="entry name" value="TrpB-like_PALP"/>
</dbReference>
<dbReference type="InterPro" id="IPR036052">
    <property type="entry name" value="TrpB-like_PALP_sf"/>
</dbReference>
<dbReference type="NCBIfam" id="TIGR02035">
    <property type="entry name" value="D_Ser_am_lyase"/>
    <property type="match status" value="1"/>
</dbReference>
<dbReference type="NCBIfam" id="NF002823">
    <property type="entry name" value="PRK02991.1"/>
    <property type="match status" value="1"/>
</dbReference>
<dbReference type="PANTHER" id="PTHR48078:SF9">
    <property type="entry name" value="D-SERINE DEHYDRATASE"/>
    <property type="match status" value="1"/>
</dbReference>
<dbReference type="PANTHER" id="PTHR48078">
    <property type="entry name" value="THREONINE DEHYDRATASE, MITOCHONDRIAL-RELATED"/>
    <property type="match status" value="1"/>
</dbReference>
<dbReference type="Pfam" id="PF00291">
    <property type="entry name" value="PALP"/>
    <property type="match status" value="1"/>
</dbReference>
<dbReference type="SUPFAM" id="SSF53686">
    <property type="entry name" value="Tryptophan synthase beta subunit-like PLP-dependent enzymes"/>
    <property type="match status" value="1"/>
</dbReference>
<dbReference type="PROSITE" id="PS00165">
    <property type="entry name" value="DEHYDRATASE_SER_THR"/>
    <property type="match status" value="1"/>
</dbReference>
<comment type="catalytic activity">
    <reaction evidence="1">
        <text>D-serine = pyruvate + NH4(+)</text>
        <dbReference type="Rhea" id="RHEA:13977"/>
        <dbReference type="ChEBI" id="CHEBI:15361"/>
        <dbReference type="ChEBI" id="CHEBI:28938"/>
        <dbReference type="ChEBI" id="CHEBI:35247"/>
        <dbReference type="EC" id="4.3.1.18"/>
    </reaction>
</comment>
<comment type="cofactor">
    <cofactor evidence="1">
        <name>pyridoxal 5'-phosphate</name>
        <dbReference type="ChEBI" id="CHEBI:597326"/>
    </cofactor>
</comment>
<comment type="subunit">
    <text evidence="1">Monomer.</text>
</comment>
<comment type="similarity">
    <text evidence="1">Belongs to the serine/threonine dehydratase family. DsdA subfamily.</text>
</comment>
<name>SDHD_ECO55</name>
<feature type="chain" id="PRO_1000149387" description="D-serine dehydratase">
    <location>
        <begin position="1"/>
        <end position="442"/>
    </location>
</feature>
<feature type="modified residue" description="N6-(pyridoxal phosphate)lysine" evidence="1">
    <location>
        <position position="118"/>
    </location>
</feature>